<keyword id="KW-0067">ATP-binding</keyword>
<keyword id="KW-0460">Magnesium</keyword>
<keyword id="KW-0547">Nucleotide-binding</keyword>
<keyword id="KW-0808">Transferase</keyword>
<keyword id="KW-0819">tRNA processing</keyword>
<dbReference type="EC" id="2.5.1.75" evidence="1"/>
<dbReference type="EMBL" id="CP001172">
    <property type="protein sequence ID" value="ACJ57309.1"/>
    <property type="molecule type" value="Genomic_DNA"/>
</dbReference>
<dbReference type="RefSeq" id="WP_000070779.1">
    <property type="nucleotide sequence ID" value="NZ_CP001172.1"/>
</dbReference>
<dbReference type="SMR" id="B7H141"/>
<dbReference type="GeneID" id="92894356"/>
<dbReference type="HOGENOM" id="CLU_032616_0_0_6"/>
<dbReference type="Proteomes" id="UP000006924">
    <property type="component" value="Chromosome"/>
</dbReference>
<dbReference type="GO" id="GO:0005524">
    <property type="term" value="F:ATP binding"/>
    <property type="evidence" value="ECO:0007669"/>
    <property type="project" value="UniProtKB-UniRule"/>
</dbReference>
<dbReference type="GO" id="GO:0052381">
    <property type="term" value="F:tRNA dimethylallyltransferase activity"/>
    <property type="evidence" value="ECO:0007669"/>
    <property type="project" value="UniProtKB-UniRule"/>
</dbReference>
<dbReference type="GO" id="GO:0006400">
    <property type="term" value="P:tRNA modification"/>
    <property type="evidence" value="ECO:0007669"/>
    <property type="project" value="TreeGrafter"/>
</dbReference>
<dbReference type="FunFam" id="1.10.20.140:FF:000001">
    <property type="entry name" value="tRNA dimethylallyltransferase"/>
    <property type="match status" value="1"/>
</dbReference>
<dbReference type="Gene3D" id="1.10.20.140">
    <property type="match status" value="1"/>
</dbReference>
<dbReference type="Gene3D" id="3.40.50.300">
    <property type="entry name" value="P-loop containing nucleotide triphosphate hydrolases"/>
    <property type="match status" value="1"/>
</dbReference>
<dbReference type="HAMAP" id="MF_00185">
    <property type="entry name" value="IPP_trans"/>
    <property type="match status" value="1"/>
</dbReference>
<dbReference type="InterPro" id="IPR039657">
    <property type="entry name" value="Dimethylallyltransferase"/>
</dbReference>
<dbReference type="InterPro" id="IPR018022">
    <property type="entry name" value="IPT"/>
</dbReference>
<dbReference type="InterPro" id="IPR027417">
    <property type="entry name" value="P-loop_NTPase"/>
</dbReference>
<dbReference type="NCBIfam" id="TIGR00174">
    <property type="entry name" value="miaA"/>
    <property type="match status" value="1"/>
</dbReference>
<dbReference type="PANTHER" id="PTHR11088">
    <property type="entry name" value="TRNA DIMETHYLALLYLTRANSFERASE"/>
    <property type="match status" value="1"/>
</dbReference>
<dbReference type="PANTHER" id="PTHR11088:SF60">
    <property type="entry name" value="TRNA DIMETHYLALLYLTRANSFERASE"/>
    <property type="match status" value="1"/>
</dbReference>
<dbReference type="Pfam" id="PF01715">
    <property type="entry name" value="IPPT"/>
    <property type="match status" value="1"/>
</dbReference>
<dbReference type="SUPFAM" id="SSF52540">
    <property type="entry name" value="P-loop containing nucleoside triphosphate hydrolases"/>
    <property type="match status" value="2"/>
</dbReference>
<feature type="chain" id="PRO_1000118512" description="tRNA dimethylallyltransferase">
    <location>
        <begin position="1"/>
        <end position="314"/>
    </location>
</feature>
<feature type="region of interest" description="Interaction with substrate tRNA" evidence="1">
    <location>
        <begin position="37"/>
        <end position="40"/>
    </location>
</feature>
<feature type="region of interest" description="Interaction with substrate tRNA" evidence="1">
    <location>
        <begin position="162"/>
        <end position="166"/>
    </location>
</feature>
<feature type="binding site" evidence="1">
    <location>
        <begin position="12"/>
        <end position="19"/>
    </location>
    <ligand>
        <name>ATP</name>
        <dbReference type="ChEBI" id="CHEBI:30616"/>
    </ligand>
</feature>
<feature type="binding site" evidence="1">
    <location>
        <begin position="14"/>
        <end position="19"/>
    </location>
    <ligand>
        <name>substrate</name>
    </ligand>
</feature>
<feature type="site" description="Interaction with substrate tRNA" evidence="1">
    <location>
        <position position="103"/>
    </location>
</feature>
<feature type="site" description="Interaction with substrate tRNA" evidence="1">
    <location>
        <position position="126"/>
    </location>
</feature>
<accession>B7H141</accession>
<name>MIAA_ACIB3</name>
<reference key="1">
    <citation type="journal article" date="2008" name="J. Bacteriol.">
        <title>Comparative genome sequence analysis of multidrug-resistant Acinetobacter baumannii.</title>
        <authorList>
            <person name="Adams M.D."/>
            <person name="Goglin K."/>
            <person name="Molyneaux N."/>
            <person name="Hujer K.M."/>
            <person name="Lavender H."/>
            <person name="Jamison J.J."/>
            <person name="MacDonald I.J."/>
            <person name="Martin K.M."/>
            <person name="Russo T."/>
            <person name="Campagnari A.A."/>
            <person name="Hujer A.M."/>
            <person name="Bonomo R.A."/>
            <person name="Gill S.R."/>
        </authorList>
    </citation>
    <scope>NUCLEOTIDE SEQUENCE [LARGE SCALE GENOMIC DNA]</scope>
    <source>
        <strain>AB307-0294</strain>
    </source>
</reference>
<sequence>MSNQLPVINLMGPTASGKTALACELYERGNFELISVDSALVYKDMDIGTAKPTREEQELYPHHLIDIITPLEVYSAAQFVEDACALIDEMHSRGKTPILVGGTMLYFKALLEGLSSNLPSADANVRAAIEEKAANEGWQAVYDELVAVDPAAGVKFKVSDKQRIIRALEVYRITGQPITKLQAEQPKNVPYRYTFHNYALLPDRLELHQRIEQRLSKMWDIGFLSEVESLIEKYDLDENLPSMRSVGYRQALEFLLKSDMSLKKKQEMEDKALFATRQLAKRQYTWLRSLQEIHDFKTYLTIKQAKEDLRNSYG</sequence>
<protein>
    <recommendedName>
        <fullName evidence="1">tRNA dimethylallyltransferase</fullName>
        <ecNumber evidence="1">2.5.1.75</ecNumber>
    </recommendedName>
    <alternativeName>
        <fullName evidence="1">Dimethylallyl diphosphate:tRNA dimethylallyltransferase</fullName>
        <shortName evidence="1">DMAPP:tRNA dimethylallyltransferase</shortName>
        <shortName evidence="1">DMATase</shortName>
    </alternativeName>
    <alternativeName>
        <fullName evidence="1">Isopentenyl-diphosphate:tRNA isopentenyltransferase</fullName>
        <shortName evidence="1">IPP transferase</shortName>
        <shortName evidence="1">IPPT</shortName>
        <shortName evidence="1">IPTase</shortName>
    </alternativeName>
</protein>
<evidence type="ECO:0000255" key="1">
    <source>
        <dbReference type="HAMAP-Rule" id="MF_00185"/>
    </source>
</evidence>
<proteinExistence type="inferred from homology"/>
<gene>
    <name evidence="1" type="primary">miaA</name>
    <name type="ordered locus">ABBFA_001352</name>
</gene>
<comment type="function">
    <text evidence="1">Catalyzes the transfer of a dimethylallyl group onto the adenine at position 37 in tRNAs that read codons beginning with uridine, leading to the formation of N6-(dimethylallyl)adenosine (i(6)A).</text>
</comment>
<comment type="catalytic activity">
    <reaction evidence="1">
        <text>adenosine(37) in tRNA + dimethylallyl diphosphate = N(6)-dimethylallyladenosine(37) in tRNA + diphosphate</text>
        <dbReference type="Rhea" id="RHEA:26482"/>
        <dbReference type="Rhea" id="RHEA-COMP:10162"/>
        <dbReference type="Rhea" id="RHEA-COMP:10375"/>
        <dbReference type="ChEBI" id="CHEBI:33019"/>
        <dbReference type="ChEBI" id="CHEBI:57623"/>
        <dbReference type="ChEBI" id="CHEBI:74411"/>
        <dbReference type="ChEBI" id="CHEBI:74415"/>
        <dbReference type="EC" id="2.5.1.75"/>
    </reaction>
</comment>
<comment type="cofactor">
    <cofactor evidence="1">
        <name>Mg(2+)</name>
        <dbReference type="ChEBI" id="CHEBI:18420"/>
    </cofactor>
</comment>
<comment type="subunit">
    <text evidence="1">Monomer.</text>
</comment>
<comment type="similarity">
    <text evidence="1">Belongs to the IPP transferase family.</text>
</comment>
<organism>
    <name type="scientific">Acinetobacter baumannii (strain AB307-0294)</name>
    <dbReference type="NCBI Taxonomy" id="557600"/>
    <lineage>
        <taxon>Bacteria</taxon>
        <taxon>Pseudomonadati</taxon>
        <taxon>Pseudomonadota</taxon>
        <taxon>Gammaproteobacteria</taxon>
        <taxon>Moraxellales</taxon>
        <taxon>Moraxellaceae</taxon>
        <taxon>Acinetobacter</taxon>
        <taxon>Acinetobacter calcoaceticus/baumannii complex</taxon>
    </lineage>
</organism>